<reference key="1">
    <citation type="journal article" date="2006" name="J. Bacteriol.">
        <title>Complete genome sequence of Yersinia pestis strains Antiqua and Nepal516: evidence of gene reduction in an emerging pathogen.</title>
        <authorList>
            <person name="Chain P.S.G."/>
            <person name="Hu P."/>
            <person name="Malfatti S.A."/>
            <person name="Radnedge L."/>
            <person name="Larimer F."/>
            <person name="Vergez L.M."/>
            <person name="Worsham P."/>
            <person name="Chu M.C."/>
            <person name="Andersen G.L."/>
        </authorList>
    </citation>
    <scope>NUCLEOTIDE SEQUENCE [LARGE SCALE GENOMIC DNA]</scope>
    <source>
        <strain>Nepal516</strain>
    </source>
</reference>
<reference key="2">
    <citation type="submission" date="2009-04" db="EMBL/GenBank/DDBJ databases">
        <title>Yersinia pestis Nepal516A whole genome shotgun sequencing project.</title>
        <authorList>
            <person name="Plunkett G. III"/>
            <person name="Anderson B.D."/>
            <person name="Baumler D.J."/>
            <person name="Burland V."/>
            <person name="Cabot E.L."/>
            <person name="Glasner J.D."/>
            <person name="Mau B."/>
            <person name="Neeno-Eckwall E."/>
            <person name="Perna N.T."/>
            <person name="Munk A.C."/>
            <person name="Tapia R."/>
            <person name="Green L.D."/>
            <person name="Rogers Y.C."/>
            <person name="Detter J.C."/>
            <person name="Bruce D.C."/>
            <person name="Brettin T.S."/>
        </authorList>
    </citation>
    <scope>NUCLEOTIDE SEQUENCE [LARGE SCALE GENOMIC DNA]</scope>
    <source>
        <strain>Nepal516</strain>
    </source>
</reference>
<organism>
    <name type="scientific">Yersinia pestis bv. Antiqua (strain Nepal516)</name>
    <dbReference type="NCBI Taxonomy" id="377628"/>
    <lineage>
        <taxon>Bacteria</taxon>
        <taxon>Pseudomonadati</taxon>
        <taxon>Pseudomonadota</taxon>
        <taxon>Gammaproteobacteria</taxon>
        <taxon>Enterobacterales</taxon>
        <taxon>Yersiniaceae</taxon>
        <taxon>Yersinia</taxon>
    </lineage>
</organism>
<dbReference type="EMBL" id="CP000305">
    <property type="protein sequence ID" value="ABG20068.1"/>
    <property type="molecule type" value="Genomic_DNA"/>
</dbReference>
<dbReference type="EMBL" id="ACNQ01000019">
    <property type="protein sequence ID" value="EEO74648.1"/>
    <property type="molecule type" value="Genomic_DNA"/>
</dbReference>
<dbReference type="RefSeq" id="WP_002208935.1">
    <property type="nucleotide sequence ID" value="NZ_ACNQ01000019.1"/>
</dbReference>
<dbReference type="SMR" id="Q1CD62"/>
<dbReference type="GeneID" id="57974482"/>
<dbReference type="KEGG" id="ypn:YPN_3741"/>
<dbReference type="HOGENOM" id="CLU_142318_0_0_6"/>
<dbReference type="Proteomes" id="UP000008936">
    <property type="component" value="Chromosome"/>
</dbReference>
<dbReference type="GO" id="GO:0005737">
    <property type="term" value="C:cytoplasm"/>
    <property type="evidence" value="ECO:0007669"/>
    <property type="project" value="UniProtKB-SubCell"/>
</dbReference>
<dbReference type="GO" id="GO:0003677">
    <property type="term" value="F:DNA binding"/>
    <property type="evidence" value="ECO:0007669"/>
    <property type="project" value="UniProtKB-KW"/>
</dbReference>
<dbReference type="GO" id="GO:0003700">
    <property type="term" value="F:DNA-binding transcription factor activity"/>
    <property type="evidence" value="ECO:0007669"/>
    <property type="project" value="InterPro"/>
</dbReference>
<dbReference type="GO" id="GO:0009086">
    <property type="term" value="P:methionine biosynthetic process"/>
    <property type="evidence" value="ECO:0007669"/>
    <property type="project" value="UniProtKB-UniRule"/>
</dbReference>
<dbReference type="GO" id="GO:0045892">
    <property type="term" value="P:negative regulation of DNA-templated transcription"/>
    <property type="evidence" value="ECO:0007669"/>
    <property type="project" value="UniProtKB-UniRule"/>
</dbReference>
<dbReference type="CDD" id="cd00490">
    <property type="entry name" value="Met_repressor_MetJ"/>
    <property type="match status" value="1"/>
</dbReference>
<dbReference type="FunFam" id="1.10.140.10:FF:000001">
    <property type="entry name" value="Met repressor"/>
    <property type="match status" value="1"/>
</dbReference>
<dbReference type="Gene3D" id="1.10.140.10">
    <property type="entry name" value="MET Apo-Repressor, subunit A"/>
    <property type="match status" value="1"/>
</dbReference>
<dbReference type="HAMAP" id="MF_00744">
    <property type="entry name" value="MetJ"/>
    <property type="match status" value="1"/>
</dbReference>
<dbReference type="InterPro" id="IPR002084">
    <property type="entry name" value="Met_repressor_MetJ"/>
</dbReference>
<dbReference type="InterPro" id="IPR023453">
    <property type="entry name" value="Met_repressor_MetJ_dom_sf"/>
</dbReference>
<dbReference type="InterPro" id="IPR010985">
    <property type="entry name" value="Ribbon_hlx_hlx"/>
</dbReference>
<dbReference type="NCBIfam" id="NF003622">
    <property type="entry name" value="PRK05264.1"/>
    <property type="match status" value="1"/>
</dbReference>
<dbReference type="Pfam" id="PF01340">
    <property type="entry name" value="MetJ"/>
    <property type="match status" value="1"/>
</dbReference>
<dbReference type="SUPFAM" id="SSF47598">
    <property type="entry name" value="Ribbon-helix-helix"/>
    <property type="match status" value="1"/>
</dbReference>
<evidence type="ECO:0000255" key="1">
    <source>
        <dbReference type="HAMAP-Rule" id="MF_00744"/>
    </source>
</evidence>
<comment type="function">
    <text evidence="1">This regulatory protein, when combined with SAM (S-adenosylmethionine) represses the expression of the methionine regulon and of enzymes involved in SAM synthesis.</text>
</comment>
<comment type="subunit">
    <text evidence="1">Homodimer.</text>
</comment>
<comment type="subcellular location">
    <subcellularLocation>
        <location evidence="1">Cytoplasm</location>
    </subcellularLocation>
</comment>
<comment type="domain">
    <text>Does not bind DNA by a helix-turn-helix motif.</text>
</comment>
<comment type="similarity">
    <text evidence="1">Belongs to the MetJ family.</text>
</comment>
<sequence length="105" mass="12149">MAEWNGEYVSPYAEHGKKSKQVKKITVSIPLKVLKILTDERTRRQVNNLRHATNSELLCEAFLHAFTGQPLPNDEDLRKERSDEIPEAAKILMRELGVDPDTWEY</sequence>
<protein>
    <recommendedName>
        <fullName evidence="1">Met repressor</fullName>
    </recommendedName>
    <alternativeName>
        <fullName evidence="1">Met regulon regulatory protein MetJ</fullName>
    </alternativeName>
</protein>
<accession>Q1CD62</accession>
<accession>D1Q295</accession>
<proteinExistence type="inferred from homology"/>
<keyword id="KW-0028">Amino-acid biosynthesis</keyword>
<keyword id="KW-0963">Cytoplasm</keyword>
<keyword id="KW-0238">DNA-binding</keyword>
<keyword id="KW-0486">Methionine biosynthesis</keyword>
<keyword id="KW-0678">Repressor</keyword>
<keyword id="KW-0804">Transcription</keyword>
<keyword id="KW-0805">Transcription regulation</keyword>
<name>METJ_YERPN</name>
<gene>
    <name evidence="1" type="primary">metJ</name>
    <name type="ordered locus">YPN_3741</name>
    <name type="ORF">YP516_4254</name>
</gene>
<feature type="chain" id="PRO_1000046503" description="Met repressor">
    <location>
        <begin position="1"/>
        <end position="105"/>
    </location>
</feature>